<comment type="function">
    <text evidence="2">E3 ubiquitin-protein ligase that may mediate ubiquitination of MHC-I and CD4, and promote their subsequent endocytosis and sorting to lysosomes via multivesicular bodies. E3 ubiquitin ligases accept ubiquitin from an E2 ubiquitin-conjugating enzyme in the form of a thioester and then directly transfer the ubiquitin to targeted substrates.</text>
</comment>
<comment type="catalytic activity">
    <reaction>
        <text>S-ubiquitinyl-[E2 ubiquitin-conjugating enzyme]-L-cysteine + [acceptor protein]-L-lysine = [E2 ubiquitin-conjugating enzyme]-L-cysteine + N(6)-ubiquitinyl-[acceptor protein]-L-lysine.</text>
        <dbReference type="EC" id="2.3.2.27"/>
    </reaction>
</comment>
<comment type="pathway">
    <text>Protein modification; protein ubiquitination.</text>
</comment>
<comment type="subcellular location">
    <subcellularLocation>
        <location evidence="1">Golgi apparatus membrane</location>
        <topology evidence="1">Multi-pass membrane protein</topology>
    </subcellularLocation>
</comment>
<comment type="domain">
    <text evidence="4">The RING-CH-type zinc finger domain is required for E3 ligase activity.</text>
</comment>
<proteinExistence type="evidence at transcript level"/>
<evidence type="ECO:0000250" key="1"/>
<evidence type="ECO:0000250" key="2">
    <source>
        <dbReference type="UniProtKB" id="Q9P2E8"/>
    </source>
</evidence>
<evidence type="ECO:0000255" key="3"/>
<evidence type="ECO:0000255" key="4">
    <source>
        <dbReference type="PROSITE-ProRule" id="PRU00623"/>
    </source>
</evidence>
<evidence type="ECO:0000256" key="5">
    <source>
        <dbReference type="SAM" id="MobiDB-lite"/>
    </source>
</evidence>
<evidence type="ECO:0000305" key="6"/>
<dbReference type="EC" id="2.3.2.27"/>
<dbReference type="EMBL" id="AK122502">
    <property type="protein sequence ID" value="BAC65784.1"/>
    <property type="molecule type" value="mRNA"/>
</dbReference>
<dbReference type="EMBL" id="BC098191">
    <property type="protein sequence ID" value="AAH98191.1"/>
    <property type="molecule type" value="mRNA"/>
</dbReference>
<dbReference type="CCDS" id="CCDS15034.1"/>
<dbReference type="RefSeq" id="NP_001038998.1">
    <property type="nucleotide sequence ID" value="NM_001045533.2"/>
</dbReference>
<dbReference type="BioGRID" id="237849">
    <property type="interactions" value="1"/>
</dbReference>
<dbReference type="FunCoup" id="Q80TE3">
    <property type="interactions" value="300"/>
</dbReference>
<dbReference type="STRING" id="10090.ENSMUSP00000042803"/>
<dbReference type="GlyGen" id="Q80TE3">
    <property type="glycosylation" value="1 site"/>
</dbReference>
<dbReference type="iPTMnet" id="Q80TE3"/>
<dbReference type="PhosphoSitePlus" id="Q80TE3"/>
<dbReference type="PaxDb" id="10090-ENSMUSP00000042803"/>
<dbReference type="Antibodypedia" id="3020">
    <property type="antibodies" value="176 antibodies from 27 providers"/>
</dbReference>
<dbReference type="Ensembl" id="ENSMUST00000047786.6">
    <property type="protein sequence ID" value="ENSMUSP00000042803.6"/>
    <property type="gene ID" value="ENSMUSG00000039372.6"/>
</dbReference>
<dbReference type="GeneID" id="381270"/>
<dbReference type="KEGG" id="mmu:381270"/>
<dbReference type="UCSC" id="uc007bkn.1">
    <property type="organism name" value="mouse"/>
</dbReference>
<dbReference type="AGR" id="MGI:2683550"/>
<dbReference type="CTD" id="57574"/>
<dbReference type="MGI" id="MGI:2683550">
    <property type="gene designation" value="Marchf4"/>
</dbReference>
<dbReference type="VEuPathDB" id="HostDB:ENSMUSG00000039372"/>
<dbReference type="eggNOG" id="KOG1609">
    <property type="taxonomic scope" value="Eukaryota"/>
</dbReference>
<dbReference type="GeneTree" id="ENSGT00940000158179"/>
<dbReference type="HOGENOM" id="CLU_045217_0_1_1"/>
<dbReference type="InParanoid" id="Q80TE3"/>
<dbReference type="OMA" id="CCGLCTP"/>
<dbReference type="OrthoDB" id="264354at2759"/>
<dbReference type="PhylomeDB" id="Q80TE3"/>
<dbReference type="TreeFam" id="TF319557"/>
<dbReference type="UniPathway" id="UPA00143"/>
<dbReference type="BioGRID-ORCS" id="381270">
    <property type="hits" value="1 hit in 48 CRISPR screens"/>
</dbReference>
<dbReference type="ChiTaRS" id="March4">
    <property type="organism name" value="mouse"/>
</dbReference>
<dbReference type="PRO" id="PR:Q80TE3"/>
<dbReference type="Proteomes" id="UP000000589">
    <property type="component" value="Chromosome 1"/>
</dbReference>
<dbReference type="RNAct" id="Q80TE3">
    <property type="molecule type" value="protein"/>
</dbReference>
<dbReference type="Bgee" id="ENSMUSG00000039372">
    <property type="expression patterns" value="Expressed in embryonic brain and 46 other cell types or tissues"/>
</dbReference>
<dbReference type="GO" id="GO:0000139">
    <property type="term" value="C:Golgi membrane"/>
    <property type="evidence" value="ECO:0007669"/>
    <property type="project" value="UniProtKB-SubCell"/>
</dbReference>
<dbReference type="GO" id="GO:0005795">
    <property type="term" value="C:Golgi stack"/>
    <property type="evidence" value="ECO:0000250"/>
    <property type="project" value="UniProtKB"/>
</dbReference>
<dbReference type="GO" id="GO:0005802">
    <property type="term" value="C:trans-Golgi network"/>
    <property type="evidence" value="ECO:0000250"/>
    <property type="project" value="UniProtKB"/>
</dbReference>
<dbReference type="GO" id="GO:0004842">
    <property type="term" value="F:ubiquitin-protein transferase activity"/>
    <property type="evidence" value="ECO:0000250"/>
    <property type="project" value="UniProtKB"/>
</dbReference>
<dbReference type="GO" id="GO:0008270">
    <property type="term" value="F:zinc ion binding"/>
    <property type="evidence" value="ECO:0007669"/>
    <property type="project" value="UniProtKB-KW"/>
</dbReference>
<dbReference type="GO" id="GO:0016567">
    <property type="term" value="P:protein ubiquitination"/>
    <property type="evidence" value="ECO:0007669"/>
    <property type="project" value="UniProtKB-UniPathway"/>
</dbReference>
<dbReference type="CDD" id="cd16824">
    <property type="entry name" value="RING_CH-C4HC3_MARCH4"/>
    <property type="match status" value="1"/>
</dbReference>
<dbReference type="FunFam" id="3.30.40.10:FF:000209">
    <property type="entry name" value="E3 ubiquitin-protein ligase MARCH4"/>
    <property type="match status" value="1"/>
</dbReference>
<dbReference type="Gene3D" id="3.30.40.10">
    <property type="entry name" value="Zinc/RING finger domain, C3HC4 (zinc finger)"/>
    <property type="match status" value="1"/>
</dbReference>
<dbReference type="InterPro" id="IPR046356">
    <property type="entry name" value="MARCHF4/9/11"/>
</dbReference>
<dbReference type="InterPro" id="IPR047905">
    <property type="entry name" value="MARCHF4_RING_CH-C4HC3"/>
</dbReference>
<dbReference type="InterPro" id="IPR011016">
    <property type="entry name" value="Znf_RING-CH"/>
</dbReference>
<dbReference type="InterPro" id="IPR013083">
    <property type="entry name" value="Znf_RING/FYVE/PHD"/>
</dbReference>
<dbReference type="PANTHER" id="PTHR46053">
    <property type="entry name" value="E3 UBIQUITIN-PROTEIN LIGASE MARCH4-LIKE"/>
    <property type="match status" value="1"/>
</dbReference>
<dbReference type="PANTHER" id="PTHR46053:SF3">
    <property type="entry name" value="E3 UBIQUITIN-PROTEIN LIGASE MARCHF4"/>
    <property type="match status" value="1"/>
</dbReference>
<dbReference type="Pfam" id="PF12906">
    <property type="entry name" value="RINGv"/>
    <property type="match status" value="1"/>
</dbReference>
<dbReference type="SMART" id="SM00744">
    <property type="entry name" value="RINGv"/>
    <property type="match status" value="1"/>
</dbReference>
<dbReference type="SUPFAM" id="SSF57850">
    <property type="entry name" value="RING/U-box"/>
    <property type="match status" value="1"/>
</dbReference>
<dbReference type="PROSITE" id="PS51292">
    <property type="entry name" value="ZF_RING_CH"/>
    <property type="match status" value="1"/>
</dbReference>
<gene>
    <name type="primary">Marchf4</name>
    <name type="synonym">Kiaa1399</name>
    <name type="synonym">March4</name>
</gene>
<protein>
    <recommendedName>
        <fullName>E3 ubiquitin-protein ligase MARCHF4</fullName>
        <ecNumber>2.3.2.27</ecNumber>
    </recommendedName>
    <alternativeName>
        <fullName>Membrane-associated RING finger protein 4</fullName>
    </alternativeName>
    <alternativeName>
        <fullName>Membrane-associated RING-CH protein IV</fullName>
        <shortName>MARCH-IV</shortName>
    </alternativeName>
    <alternativeName>
        <fullName evidence="6">RING-type E3 ubiquitin transferase MARCHF4</fullName>
    </alternativeName>
</protein>
<accession>Q80TE3</accession>
<accession>Q4QQN4</accession>
<organism>
    <name type="scientific">Mus musculus</name>
    <name type="common">Mouse</name>
    <dbReference type="NCBI Taxonomy" id="10090"/>
    <lineage>
        <taxon>Eukaryota</taxon>
        <taxon>Metazoa</taxon>
        <taxon>Chordata</taxon>
        <taxon>Craniata</taxon>
        <taxon>Vertebrata</taxon>
        <taxon>Euteleostomi</taxon>
        <taxon>Mammalia</taxon>
        <taxon>Eutheria</taxon>
        <taxon>Euarchontoglires</taxon>
        <taxon>Glires</taxon>
        <taxon>Rodentia</taxon>
        <taxon>Myomorpha</taxon>
        <taxon>Muroidea</taxon>
        <taxon>Muridae</taxon>
        <taxon>Murinae</taxon>
        <taxon>Mus</taxon>
        <taxon>Mus</taxon>
    </lineage>
</organism>
<keyword id="KW-0333">Golgi apparatus</keyword>
<keyword id="KW-0472">Membrane</keyword>
<keyword id="KW-0479">Metal-binding</keyword>
<keyword id="KW-1185">Reference proteome</keyword>
<keyword id="KW-0732">Signal</keyword>
<keyword id="KW-0808">Transferase</keyword>
<keyword id="KW-0812">Transmembrane</keyword>
<keyword id="KW-1133">Transmembrane helix</keyword>
<keyword id="KW-0833">Ubl conjugation pathway</keyword>
<keyword id="KW-0862">Zinc</keyword>
<keyword id="KW-0863">Zinc-finger</keyword>
<reference key="1">
    <citation type="journal article" date="2003" name="DNA Res.">
        <title>Prediction of the coding sequences of mouse homologues of KIAA gene: II. The complete nucleotide sequences of 400 mouse KIAA-homologous cDNAs identified by screening of terminal sequences of cDNA clones randomly sampled from size-fractionated libraries.</title>
        <authorList>
            <person name="Okazaki N."/>
            <person name="Kikuno R."/>
            <person name="Ohara R."/>
            <person name="Inamoto S."/>
            <person name="Aizawa H."/>
            <person name="Yuasa S."/>
            <person name="Nakajima D."/>
            <person name="Nagase T."/>
            <person name="Ohara O."/>
            <person name="Koga H."/>
        </authorList>
    </citation>
    <scope>NUCLEOTIDE SEQUENCE [LARGE SCALE MRNA]</scope>
    <source>
        <tissue>Brain</tissue>
    </source>
</reference>
<reference key="2">
    <citation type="journal article" date="2004" name="Genome Res.">
        <title>The status, quality, and expansion of the NIH full-length cDNA project: the Mammalian Gene Collection (MGC).</title>
        <authorList>
            <consortium name="The MGC Project Team"/>
        </authorList>
    </citation>
    <scope>NUCLEOTIDE SEQUENCE [LARGE SCALE MRNA]</scope>
    <source>
        <strain>C57BL/6J</strain>
        <tissue>Brain</tissue>
    </source>
</reference>
<name>MARH4_MOUSE</name>
<sequence>MLMPLGGLLWWWCCCCGWYSCGLCTPAPQMLRHQGLLKCRCRMLFNDLKVFLLRRPPPAPLPMHGDPQLPGVAANNNTLPALGAGGWAGWRGPREAVGRETPPLPPPPPLPPSGDDDWDGPATGPPASLLSSASSDEFCKEKTEDCYSLGSSLDSGMRTPLCRICFQGPEQGELLSPCRCDGSVKCTHQPCLIKWISERGCWSCELCYYKYHVIAISTKNPLQWQAISLTVIEKVQIAAAILGSLFLIASISWLIWSTFSPSAKWQRQDLLFQICYGMYGFMDVVCIGLIIHEGPSVYRIFKRWQAVNQQWKVLNYDKTKDLEDQKSGGRTNLQTSSSAQANLPSAEEEAASPPAREEGPTRAASHPSGPVSQHHCAYTILHILSHLRPHDQRSTQGSGRELVMRVTTV</sequence>
<feature type="signal peptide" evidence="3">
    <location>
        <begin position="1"/>
        <end position="17"/>
    </location>
</feature>
<feature type="chain" id="PRO_0000055931" description="E3 ubiquitin-protein ligase MARCHF4">
    <location>
        <begin position="18"/>
        <end position="409"/>
    </location>
</feature>
<feature type="transmembrane region" description="Helical" evidence="3">
    <location>
        <begin position="242"/>
        <end position="262"/>
    </location>
</feature>
<feature type="transmembrane region" description="Helical" evidence="3">
    <location>
        <begin position="271"/>
        <end position="291"/>
    </location>
</feature>
<feature type="zinc finger region" description="RING-CH-type" evidence="4">
    <location>
        <begin position="154"/>
        <end position="214"/>
    </location>
</feature>
<feature type="region of interest" description="Disordered" evidence="5">
    <location>
        <begin position="92"/>
        <end position="133"/>
    </location>
</feature>
<feature type="region of interest" description="Disordered" evidence="5">
    <location>
        <begin position="323"/>
        <end position="372"/>
    </location>
</feature>
<feature type="region of interest" description="Disordered" evidence="5">
    <location>
        <begin position="389"/>
        <end position="409"/>
    </location>
</feature>
<feature type="compositionally biased region" description="Pro residues" evidence="5">
    <location>
        <begin position="102"/>
        <end position="112"/>
    </location>
</feature>
<feature type="compositionally biased region" description="Polar residues" evidence="5">
    <location>
        <begin position="328"/>
        <end position="343"/>
    </location>
</feature>
<feature type="binding site" evidence="4">
    <location>
        <position position="162"/>
    </location>
    <ligand>
        <name>Zn(2+)</name>
        <dbReference type="ChEBI" id="CHEBI:29105"/>
        <label>1</label>
    </ligand>
</feature>
<feature type="binding site" evidence="4">
    <location>
        <position position="165"/>
    </location>
    <ligand>
        <name>Zn(2+)</name>
        <dbReference type="ChEBI" id="CHEBI:29105"/>
        <label>1</label>
    </ligand>
</feature>
<feature type="binding site" evidence="4">
    <location>
        <position position="178"/>
    </location>
    <ligand>
        <name>Zn(2+)</name>
        <dbReference type="ChEBI" id="CHEBI:29105"/>
        <label>2</label>
    </ligand>
</feature>
<feature type="binding site" evidence="4">
    <location>
        <position position="180"/>
    </location>
    <ligand>
        <name>Zn(2+)</name>
        <dbReference type="ChEBI" id="CHEBI:29105"/>
        <label>2</label>
    </ligand>
</feature>
<feature type="binding site" evidence="4">
    <location>
        <position position="188"/>
    </location>
    <ligand>
        <name>Zn(2+)</name>
        <dbReference type="ChEBI" id="CHEBI:29105"/>
        <label>1</label>
    </ligand>
</feature>
<feature type="binding site" evidence="4">
    <location>
        <position position="191"/>
    </location>
    <ligand>
        <name>Zn(2+)</name>
        <dbReference type="ChEBI" id="CHEBI:29105"/>
        <label>1</label>
    </ligand>
</feature>
<feature type="binding site" evidence="4">
    <location>
        <position position="204"/>
    </location>
    <ligand>
        <name>Zn(2+)</name>
        <dbReference type="ChEBI" id="CHEBI:29105"/>
        <label>2</label>
    </ligand>
</feature>
<feature type="binding site" evidence="4">
    <location>
        <position position="207"/>
    </location>
    <ligand>
        <name>Zn(2+)</name>
        <dbReference type="ChEBI" id="CHEBI:29105"/>
        <label>2</label>
    </ligand>
</feature>
<feature type="sequence conflict" description="In Ref. 1; AAH98191." evidence="6" ref="1">
    <original>IAAAI</original>
    <variation>CSRH</variation>
    <location>
        <begin position="237"/>
        <end position="241"/>
    </location>
</feature>